<proteinExistence type="inferred from homology"/>
<feature type="chain" id="PRO_1000067809" description="Large ribosomal subunit protein bL21">
    <location>
        <begin position="1"/>
        <end position="103"/>
    </location>
</feature>
<reference key="1">
    <citation type="submission" date="2006-08" db="EMBL/GenBank/DDBJ databases">
        <title>Complete sequence of chromosome 1 of Burkholderia cenocepacia HI2424.</title>
        <authorList>
            <person name="Copeland A."/>
            <person name="Lucas S."/>
            <person name="Lapidus A."/>
            <person name="Barry K."/>
            <person name="Detter J.C."/>
            <person name="Glavina del Rio T."/>
            <person name="Hammon N."/>
            <person name="Israni S."/>
            <person name="Pitluck S."/>
            <person name="Chain P."/>
            <person name="Malfatti S."/>
            <person name="Shin M."/>
            <person name="Vergez L."/>
            <person name="Schmutz J."/>
            <person name="Larimer F."/>
            <person name="Land M."/>
            <person name="Hauser L."/>
            <person name="Kyrpides N."/>
            <person name="Kim E."/>
            <person name="LiPuma J.J."/>
            <person name="Gonzalez C.F."/>
            <person name="Konstantinidis K."/>
            <person name="Tiedje J.M."/>
            <person name="Richardson P."/>
        </authorList>
    </citation>
    <scope>NUCLEOTIDE SEQUENCE [LARGE SCALE GENOMIC DNA]</scope>
    <source>
        <strain>HI2424</strain>
    </source>
</reference>
<evidence type="ECO:0000255" key="1">
    <source>
        <dbReference type="HAMAP-Rule" id="MF_01363"/>
    </source>
</evidence>
<evidence type="ECO:0000305" key="2"/>
<name>RL21_BURCH</name>
<accession>A0K4A8</accession>
<comment type="function">
    <text evidence="1">This protein binds to 23S rRNA in the presence of protein L20.</text>
</comment>
<comment type="subunit">
    <text evidence="1">Part of the 50S ribosomal subunit. Contacts protein L20.</text>
</comment>
<comment type="similarity">
    <text evidence="1">Belongs to the bacterial ribosomal protein bL21 family.</text>
</comment>
<sequence length="103" mass="11356">MYAVIKTGGKQYKVAVGEKLKVEQIPADIDAEITLDQVLAVGEGESIKFGTPLVSGASVKATVVSHGRHAKVTIFKMRRRKHYQKHGGHRQNYTELRIDAINA</sequence>
<organism>
    <name type="scientific">Burkholderia cenocepacia (strain HI2424)</name>
    <dbReference type="NCBI Taxonomy" id="331272"/>
    <lineage>
        <taxon>Bacteria</taxon>
        <taxon>Pseudomonadati</taxon>
        <taxon>Pseudomonadota</taxon>
        <taxon>Betaproteobacteria</taxon>
        <taxon>Burkholderiales</taxon>
        <taxon>Burkholderiaceae</taxon>
        <taxon>Burkholderia</taxon>
        <taxon>Burkholderia cepacia complex</taxon>
    </lineage>
</organism>
<gene>
    <name evidence="1" type="primary">rplU</name>
    <name type="ordered locus">Bcen2424_0581</name>
</gene>
<keyword id="KW-0687">Ribonucleoprotein</keyword>
<keyword id="KW-0689">Ribosomal protein</keyword>
<keyword id="KW-0694">RNA-binding</keyword>
<keyword id="KW-0699">rRNA-binding</keyword>
<protein>
    <recommendedName>
        <fullName evidence="1">Large ribosomal subunit protein bL21</fullName>
    </recommendedName>
    <alternativeName>
        <fullName evidence="2">50S ribosomal protein L21</fullName>
    </alternativeName>
</protein>
<dbReference type="EMBL" id="CP000458">
    <property type="protein sequence ID" value="ABK07335.1"/>
    <property type="molecule type" value="Genomic_DNA"/>
</dbReference>
<dbReference type="RefSeq" id="WP_006025184.1">
    <property type="nucleotide sequence ID" value="NC_008542.1"/>
</dbReference>
<dbReference type="SMR" id="A0K4A8"/>
<dbReference type="GeneID" id="98106574"/>
<dbReference type="KEGG" id="bch:Bcen2424_0581"/>
<dbReference type="HOGENOM" id="CLU_061463_3_1_4"/>
<dbReference type="GO" id="GO:0005737">
    <property type="term" value="C:cytoplasm"/>
    <property type="evidence" value="ECO:0007669"/>
    <property type="project" value="UniProtKB-ARBA"/>
</dbReference>
<dbReference type="GO" id="GO:1990904">
    <property type="term" value="C:ribonucleoprotein complex"/>
    <property type="evidence" value="ECO:0007669"/>
    <property type="project" value="UniProtKB-KW"/>
</dbReference>
<dbReference type="GO" id="GO:0005840">
    <property type="term" value="C:ribosome"/>
    <property type="evidence" value="ECO:0007669"/>
    <property type="project" value="UniProtKB-KW"/>
</dbReference>
<dbReference type="GO" id="GO:0019843">
    <property type="term" value="F:rRNA binding"/>
    <property type="evidence" value="ECO:0007669"/>
    <property type="project" value="UniProtKB-UniRule"/>
</dbReference>
<dbReference type="GO" id="GO:0003735">
    <property type="term" value="F:structural constituent of ribosome"/>
    <property type="evidence" value="ECO:0007669"/>
    <property type="project" value="InterPro"/>
</dbReference>
<dbReference type="GO" id="GO:0006412">
    <property type="term" value="P:translation"/>
    <property type="evidence" value="ECO:0007669"/>
    <property type="project" value="UniProtKB-UniRule"/>
</dbReference>
<dbReference type="HAMAP" id="MF_01363">
    <property type="entry name" value="Ribosomal_bL21"/>
    <property type="match status" value="1"/>
</dbReference>
<dbReference type="InterPro" id="IPR028909">
    <property type="entry name" value="bL21-like"/>
</dbReference>
<dbReference type="InterPro" id="IPR036164">
    <property type="entry name" value="bL21-like_sf"/>
</dbReference>
<dbReference type="InterPro" id="IPR001787">
    <property type="entry name" value="Ribosomal_bL21"/>
</dbReference>
<dbReference type="InterPro" id="IPR018258">
    <property type="entry name" value="Ribosomal_bL21_CS"/>
</dbReference>
<dbReference type="NCBIfam" id="TIGR00061">
    <property type="entry name" value="L21"/>
    <property type="match status" value="1"/>
</dbReference>
<dbReference type="PANTHER" id="PTHR21349">
    <property type="entry name" value="50S RIBOSOMAL PROTEIN L21"/>
    <property type="match status" value="1"/>
</dbReference>
<dbReference type="PANTHER" id="PTHR21349:SF0">
    <property type="entry name" value="LARGE RIBOSOMAL SUBUNIT PROTEIN BL21M"/>
    <property type="match status" value="1"/>
</dbReference>
<dbReference type="Pfam" id="PF00829">
    <property type="entry name" value="Ribosomal_L21p"/>
    <property type="match status" value="1"/>
</dbReference>
<dbReference type="SUPFAM" id="SSF141091">
    <property type="entry name" value="L21p-like"/>
    <property type="match status" value="1"/>
</dbReference>
<dbReference type="PROSITE" id="PS01169">
    <property type="entry name" value="RIBOSOMAL_L21"/>
    <property type="match status" value="1"/>
</dbReference>